<gene>
    <name evidence="1" type="primary">aroE</name>
    <name type="ordered locus">Spy49_1225c</name>
</gene>
<organism>
    <name type="scientific">Streptococcus pyogenes serotype M49 (strain NZ131)</name>
    <dbReference type="NCBI Taxonomy" id="471876"/>
    <lineage>
        <taxon>Bacteria</taxon>
        <taxon>Bacillati</taxon>
        <taxon>Bacillota</taxon>
        <taxon>Bacilli</taxon>
        <taxon>Lactobacillales</taxon>
        <taxon>Streptococcaceae</taxon>
        <taxon>Streptococcus</taxon>
    </lineage>
</organism>
<sequence length="292" mass="31276">MSERLSGHTLLVSLLATPIRHSLSPKMHNEAYAKLGLDYAYLAFEVGTEQLADAVQGIRALGIRGSNVSMPNKEAILPLLDDLSPAAELVGAVNTVVNKDGKGHLVGHITDGIGALRALADEGVSVKNKIITLAGVGGAGKAIAVQLAFDGAKEVRLFNRQATRLSSVQKLVTKLNQLTRTKVTLQDLEDQTAFKEAIRESHLFIDATSVGMKPLENLSLITDPELIRPDLVVFDIVYSPAETKLLAFARQHGAQKVINGLGMVLYQGAEAFKLITGQDMPVDAIKPLLGDE</sequence>
<accession>B5XMF0</accession>
<evidence type="ECO:0000255" key="1">
    <source>
        <dbReference type="HAMAP-Rule" id="MF_00222"/>
    </source>
</evidence>
<feature type="chain" id="PRO_1000100147" description="Shikimate dehydrogenase (NADP(+))">
    <location>
        <begin position="1"/>
        <end position="292"/>
    </location>
</feature>
<feature type="active site" description="Proton acceptor" evidence="1">
    <location>
        <position position="73"/>
    </location>
</feature>
<feature type="binding site" evidence="1">
    <location>
        <begin position="22"/>
        <end position="24"/>
    </location>
    <ligand>
        <name>shikimate</name>
        <dbReference type="ChEBI" id="CHEBI:36208"/>
    </ligand>
</feature>
<feature type="binding site" evidence="1">
    <location>
        <position position="69"/>
    </location>
    <ligand>
        <name>shikimate</name>
        <dbReference type="ChEBI" id="CHEBI:36208"/>
    </ligand>
</feature>
<feature type="binding site" evidence="1">
    <location>
        <position position="94"/>
    </location>
    <ligand>
        <name>shikimate</name>
        <dbReference type="ChEBI" id="CHEBI:36208"/>
    </ligand>
</feature>
<feature type="binding site" evidence="1">
    <location>
        <position position="111"/>
    </location>
    <ligand>
        <name>shikimate</name>
        <dbReference type="ChEBI" id="CHEBI:36208"/>
    </ligand>
</feature>
<feature type="binding site" evidence="1">
    <location>
        <begin position="135"/>
        <end position="139"/>
    </location>
    <ligand>
        <name>NADP(+)</name>
        <dbReference type="ChEBI" id="CHEBI:58349"/>
    </ligand>
</feature>
<feature type="binding site" evidence="1">
    <location>
        <position position="236"/>
    </location>
    <ligand>
        <name>NADP(+)</name>
        <dbReference type="ChEBI" id="CHEBI:58349"/>
    </ligand>
</feature>
<feature type="binding site" evidence="1">
    <location>
        <position position="238"/>
    </location>
    <ligand>
        <name>shikimate</name>
        <dbReference type="ChEBI" id="CHEBI:36208"/>
    </ligand>
</feature>
<feature type="binding site" evidence="1">
    <location>
        <position position="260"/>
    </location>
    <ligand>
        <name>NADP(+)</name>
        <dbReference type="ChEBI" id="CHEBI:58349"/>
    </ligand>
</feature>
<reference key="1">
    <citation type="journal article" date="2008" name="J. Bacteriol.">
        <title>Genome sequence of a nephritogenic and highly transformable M49 strain of Streptococcus pyogenes.</title>
        <authorList>
            <person name="McShan W.M."/>
            <person name="Ferretti J.J."/>
            <person name="Karasawa T."/>
            <person name="Suvorov A.N."/>
            <person name="Lin S."/>
            <person name="Qin B."/>
            <person name="Jia H."/>
            <person name="Kenton S."/>
            <person name="Najar F."/>
            <person name="Wu H."/>
            <person name="Scott J."/>
            <person name="Roe B.A."/>
            <person name="Savic D.J."/>
        </authorList>
    </citation>
    <scope>NUCLEOTIDE SEQUENCE [LARGE SCALE GENOMIC DNA]</scope>
    <source>
        <strain>NZ131</strain>
    </source>
</reference>
<dbReference type="EC" id="1.1.1.25" evidence="1"/>
<dbReference type="EMBL" id="CP000829">
    <property type="protein sequence ID" value="ACI61512.1"/>
    <property type="molecule type" value="Genomic_DNA"/>
</dbReference>
<dbReference type="SMR" id="B5XMF0"/>
<dbReference type="KEGG" id="soz:Spy49_1225c"/>
<dbReference type="HOGENOM" id="CLU_044063_4_4_9"/>
<dbReference type="UniPathway" id="UPA00053">
    <property type="reaction ID" value="UER00087"/>
</dbReference>
<dbReference type="Proteomes" id="UP000001039">
    <property type="component" value="Chromosome"/>
</dbReference>
<dbReference type="GO" id="GO:0050661">
    <property type="term" value="F:NADP binding"/>
    <property type="evidence" value="ECO:0007669"/>
    <property type="project" value="InterPro"/>
</dbReference>
<dbReference type="GO" id="GO:0004764">
    <property type="term" value="F:shikimate 3-dehydrogenase (NADP+) activity"/>
    <property type="evidence" value="ECO:0007669"/>
    <property type="project" value="UniProtKB-UniRule"/>
</dbReference>
<dbReference type="GO" id="GO:0008652">
    <property type="term" value="P:amino acid biosynthetic process"/>
    <property type="evidence" value="ECO:0007669"/>
    <property type="project" value="UniProtKB-KW"/>
</dbReference>
<dbReference type="GO" id="GO:0009073">
    <property type="term" value="P:aromatic amino acid family biosynthetic process"/>
    <property type="evidence" value="ECO:0007669"/>
    <property type="project" value="UniProtKB-KW"/>
</dbReference>
<dbReference type="GO" id="GO:0009423">
    <property type="term" value="P:chorismate biosynthetic process"/>
    <property type="evidence" value="ECO:0007669"/>
    <property type="project" value="UniProtKB-UniRule"/>
</dbReference>
<dbReference type="GO" id="GO:0019632">
    <property type="term" value="P:shikimate metabolic process"/>
    <property type="evidence" value="ECO:0007669"/>
    <property type="project" value="InterPro"/>
</dbReference>
<dbReference type="CDD" id="cd01065">
    <property type="entry name" value="NAD_bind_Shikimate_DH"/>
    <property type="match status" value="1"/>
</dbReference>
<dbReference type="FunFam" id="3.40.50.10860:FF:000004">
    <property type="entry name" value="Quinate/shikimate dehydrogenase"/>
    <property type="match status" value="1"/>
</dbReference>
<dbReference type="FunFam" id="3.40.50.720:FF:000086">
    <property type="entry name" value="Quinate/shikimate dehydrogenase"/>
    <property type="match status" value="1"/>
</dbReference>
<dbReference type="Gene3D" id="3.40.50.10860">
    <property type="entry name" value="Leucine Dehydrogenase, chain A, domain 1"/>
    <property type="match status" value="1"/>
</dbReference>
<dbReference type="Gene3D" id="3.40.50.720">
    <property type="entry name" value="NAD(P)-binding Rossmann-like Domain"/>
    <property type="match status" value="1"/>
</dbReference>
<dbReference type="HAMAP" id="MF_00222">
    <property type="entry name" value="Shikimate_DH_AroE"/>
    <property type="match status" value="1"/>
</dbReference>
<dbReference type="InterPro" id="IPR046346">
    <property type="entry name" value="Aminoacid_DH-like_N_sf"/>
</dbReference>
<dbReference type="InterPro" id="IPR036291">
    <property type="entry name" value="NAD(P)-bd_dom_sf"/>
</dbReference>
<dbReference type="InterPro" id="IPR041121">
    <property type="entry name" value="SDH_C"/>
</dbReference>
<dbReference type="InterPro" id="IPR011342">
    <property type="entry name" value="Shikimate_DH"/>
</dbReference>
<dbReference type="InterPro" id="IPR013708">
    <property type="entry name" value="Shikimate_DH-bd_N"/>
</dbReference>
<dbReference type="InterPro" id="IPR022893">
    <property type="entry name" value="Shikimate_DH_fam"/>
</dbReference>
<dbReference type="NCBIfam" id="TIGR00507">
    <property type="entry name" value="aroE"/>
    <property type="match status" value="1"/>
</dbReference>
<dbReference type="NCBIfam" id="NF001319">
    <property type="entry name" value="PRK00258.3-3"/>
    <property type="match status" value="1"/>
</dbReference>
<dbReference type="PANTHER" id="PTHR21089:SF1">
    <property type="entry name" value="BIFUNCTIONAL 3-DEHYDROQUINATE DEHYDRATASE_SHIKIMATE DEHYDROGENASE, CHLOROPLASTIC"/>
    <property type="match status" value="1"/>
</dbReference>
<dbReference type="PANTHER" id="PTHR21089">
    <property type="entry name" value="SHIKIMATE DEHYDROGENASE"/>
    <property type="match status" value="1"/>
</dbReference>
<dbReference type="Pfam" id="PF18317">
    <property type="entry name" value="SDH_C"/>
    <property type="match status" value="1"/>
</dbReference>
<dbReference type="Pfam" id="PF08501">
    <property type="entry name" value="Shikimate_dh_N"/>
    <property type="match status" value="1"/>
</dbReference>
<dbReference type="SUPFAM" id="SSF53223">
    <property type="entry name" value="Aminoacid dehydrogenase-like, N-terminal domain"/>
    <property type="match status" value="1"/>
</dbReference>
<dbReference type="SUPFAM" id="SSF51735">
    <property type="entry name" value="NAD(P)-binding Rossmann-fold domains"/>
    <property type="match status" value="1"/>
</dbReference>
<comment type="function">
    <text evidence="1">Involved in the biosynthesis of the chorismate, which leads to the biosynthesis of aromatic amino acids. Catalyzes the reversible NADPH linked reduction of 3-dehydroshikimate (DHSA) to yield shikimate (SA).</text>
</comment>
<comment type="catalytic activity">
    <reaction evidence="1">
        <text>shikimate + NADP(+) = 3-dehydroshikimate + NADPH + H(+)</text>
        <dbReference type="Rhea" id="RHEA:17737"/>
        <dbReference type="ChEBI" id="CHEBI:15378"/>
        <dbReference type="ChEBI" id="CHEBI:16630"/>
        <dbReference type="ChEBI" id="CHEBI:36208"/>
        <dbReference type="ChEBI" id="CHEBI:57783"/>
        <dbReference type="ChEBI" id="CHEBI:58349"/>
        <dbReference type="EC" id="1.1.1.25"/>
    </reaction>
</comment>
<comment type="pathway">
    <text evidence="1">Metabolic intermediate biosynthesis; chorismate biosynthesis; chorismate from D-erythrose 4-phosphate and phosphoenolpyruvate: step 4/7.</text>
</comment>
<comment type="subunit">
    <text evidence="1">Homodimer.</text>
</comment>
<comment type="similarity">
    <text evidence="1">Belongs to the shikimate dehydrogenase family.</text>
</comment>
<proteinExistence type="inferred from homology"/>
<name>AROE_STRPZ</name>
<protein>
    <recommendedName>
        <fullName evidence="1">Shikimate dehydrogenase (NADP(+))</fullName>
        <shortName evidence="1">SDH</shortName>
        <ecNumber evidence="1">1.1.1.25</ecNumber>
    </recommendedName>
</protein>
<keyword id="KW-0028">Amino-acid biosynthesis</keyword>
<keyword id="KW-0057">Aromatic amino acid biosynthesis</keyword>
<keyword id="KW-0521">NADP</keyword>
<keyword id="KW-0560">Oxidoreductase</keyword>